<dbReference type="EC" id="2.1.1.177" evidence="1"/>
<dbReference type="EMBL" id="CP001172">
    <property type="protein sequence ID" value="ACJ56291.1"/>
    <property type="molecule type" value="Genomic_DNA"/>
</dbReference>
<dbReference type="RefSeq" id="WP_000702193.1">
    <property type="nucleotide sequence ID" value="NZ_CP001172.1"/>
</dbReference>
<dbReference type="SMR" id="B7GXS8"/>
<dbReference type="GeneID" id="92892993"/>
<dbReference type="HOGENOM" id="CLU_100552_1_0_6"/>
<dbReference type="Proteomes" id="UP000006924">
    <property type="component" value="Chromosome"/>
</dbReference>
<dbReference type="GO" id="GO:0005737">
    <property type="term" value="C:cytoplasm"/>
    <property type="evidence" value="ECO:0007669"/>
    <property type="project" value="UniProtKB-SubCell"/>
</dbReference>
<dbReference type="GO" id="GO:0070038">
    <property type="term" value="F:rRNA (pseudouridine-N3-)-methyltransferase activity"/>
    <property type="evidence" value="ECO:0007669"/>
    <property type="project" value="UniProtKB-UniRule"/>
</dbReference>
<dbReference type="CDD" id="cd18081">
    <property type="entry name" value="RlmH-like"/>
    <property type="match status" value="1"/>
</dbReference>
<dbReference type="Gene3D" id="3.40.1280.10">
    <property type="match status" value="1"/>
</dbReference>
<dbReference type="HAMAP" id="MF_00658">
    <property type="entry name" value="23SrRNA_methyltr_H"/>
    <property type="match status" value="1"/>
</dbReference>
<dbReference type="InterPro" id="IPR029028">
    <property type="entry name" value="Alpha/beta_knot_MTases"/>
</dbReference>
<dbReference type="InterPro" id="IPR003742">
    <property type="entry name" value="RlmH-like"/>
</dbReference>
<dbReference type="InterPro" id="IPR029026">
    <property type="entry name" value="tRNA_m1G_MTases_N"/>
</dbReference>
<dbReference type="NCBIfam" id="NF000986">
    <property type="entry name" value="PRK00103.1-4"/>
    <property type="match status" value="1"/>
</dbReference>
<dbReference type="NCBIfam" id="TIGR00246">
    <property type="entry name" value="tRNA_RlmH_YbeA"/>
    <property type="match status" value="1"/>
</dbReference>
<dbReference type="PANTHER" id="PTHR33603">
    <property type="entry name" value="METHYLTRANSFERASE"/>
    <property type="match status" value="1"/>
</dbReference>
<dbReference type="PANTHER" id="PTHR33603:SF1">
    <property type="entry name" value="RIBOSOMAL RNA LARGE SUBUNIT METHYLTRANSFERASE H"/>
    <property type="match status" value="1"/>
</dbReference>
<dbReference type="Pfam" id="PF02590">
    <property type="entry name" value="SPOUT_MTase"/>
    <property type="match status" value="1"/>
</dbReference>
<dbReference type="PIRSF" id="PIRSF004505">
    <property type="entry name" value="MT_bac"/>
    <property type="match status" value="1"/>
</dbReference>
<dbReference type="SUPFAM" id="SSF75217">
    <property type="entry name" value="alpha/beta knot"/>
    <property type="match status" value="1"/>
</dbReference>
<name>RLMH_ACIB3</name>
<reference key="1">
    <citation type="journal article" date="2008" name="J. Bacteriol.">
        <title>Comparative genome sequence analysis of multidrug-resistant Acinetobacter baumannii.</title>
        <authorList>
            <person name="Adams M.D."/>
            <person name="Goglin K."/>
            <person name="Molyneaux N."/>
            <person name="Hujer K.M."/>
            <person name="Lavender H."/>
            <person name="Jamison J.J."/>
            <person name="MacDonald I.J."/>
            <person name="Martin K.M."/>
            <person name="Russo T."/>
            <person name="Campagnari A.A."/>
            <person name="Hujer A.M."/>
            <person name="Bonomo R.A."/>
            <person name="Gill S.R."/>
        </authorList>
    </citation>
    <scope>NUCLEOTIDE SEQUENCE [LARGE SCALE GENOMIC DNA]</scope>
    <source>
        <strain>AB307-0294</strain>
    </source>
</reference>
<feature type="chain" id="PRO_1000131222" description="Ribosomal RNA large subunit methyltransferase H">
    <location>
        <begin position="1"/>
        <end position="159"/>
    </location>
</feature>
<feature type="binding site" evidence="1">
    <location>
        <position position="76"/>
    </location>
    <ligand>
        <name>S-adenosyl-L-methionine</name>
        <dbReference type="ChEBI" id="CHEBI:59789"/>
    </ligand>
</feature>
<feature type="binding site" evidence="1">
    <location>
        <position position="107"/>
    </location>
    <ligand>
        <name>S-adenosyl-L-methionine</name>
        <dbReference type="ChEBI" id="CHEBI:59789"/>
    </ligand>
</feature>
<feature type="binding site" evidence="1">
    <location>
        <begin position="126"/>
        <end position="131"/>
    </location>
    <ligand>
        <name>S-adenosyl-L-methionine</name>
        <dbReference type="ChEBI" id="CHEBI:59789"/>
    </ligand>
</feature>
<organism>
    <name type="scientific">Acinetobacter baumannii (strain AB307-0294)</name>
    <dbReference type="NCBI Taxonomy" id="557600"/>
    <lineage>
        <taxon>Bacteria</taxon>
        <taxon>Pseudomonadati</taxon>
        <taxon>Pseudomonadota</taxon>
        <taxon>Gammaproteobacteria</taxon>
        <taxon>Moraxellales</taxon>
        <taxon>Moraxellaceae</taxon>
        <taxon>Acinetobacter</taxon>
        <taxon>Acinetobacter calcoaceticus/baumannii complex</taxon>
    </lineage>
</organism>
<protein>
    <recommendedName>
        <fullName evidence="1">Ribosomal RNA large subunit methyltransferase H</fullName>
        <ecNumber evidence="1">2.1.1.177</ecNumber>
    </recommendedName>
    <alternativeName>
        <fullName evidence="1">23S rRNA (pseudouridine1915-N3)-methyltransferase</fullName>
    </alternativeName>
    <alternativeName>
        <fullName evidence="1">23S rRNA m3Psi1915 methyltransferase</fullName>
    </alternativeName>
    <alternativeName>
        <fullName evidence="1">rRNA (pseudouridine-N3-)-methyltransferase RlmH</fullName>
    </alternativeName>
</protein>
<accession>B7GXS8</accession>
<evidence type="ECO:0000255" key="1">
    <source>
        <dbReference type="HAMAP-Rule" id="MF_00658"/>
    </source>
</evidence>
<proteinExistence type="inferred from homology"/>
<gene>
    <name evidence="1" type="primary">rlmH</name>
    <name type="ordered locus">ABBFA_002580</name>
</gene>
<keyword id="KW-0963">Cytoplasm</keyword>
<keyword id="KW-0489">Methyltransferase</keyword>
<keyword id="KW-0698">rRNA processing</keyword>
<keyword id="KW-0949">S-adenosyl-L-methionine</keyword>
<keyword id="KW-0808">Transferase</keyword>
<comment type="function">
    <text evidence="1">Specifically methylates the pseudouridine at position 1915 (m3Psi1915) in 23S rRNA.</text>
</comment>
<comment type="catalytic activity">
    <reaction evidence="1">
        <text>pseudouridine(1915) in 23S rRNA + S-adenosyl-L-methionine = N(3)-methylpseudouridine(1915) in 23S rRNA + S-adenosyl-L-homocysteine + H(+)</text>
        <dbReference type="Rhea" id="RHEA:42752"/>
        <dbReference type="Rhea" id="RHEA-COMP:10221"/>
        <dbReference type="Rhea" id="RHEA-COMP:10222"/>
        <dbReference type="ChEBI" id="CHEBI:15378"/>
        <dbReference type="ChEBI" id="CHEBI:57856"/>
        <dbReference type="ChEBI" id="CHEBI:59789"/>
        <dbReference type="ChEBI" id="CHEBI:65314"/>
        <dbReference type="ChEBI" id="CHEBI:74486"/>
        <dbReference type="EC" id="2.1.1.177"/>
    </reaction>
</comment>
<comment type="subunit">
    <text evidence="1">Homodimer.</text>
</comment>
<comment type="subcellular location">
    <subcellularLocation>
        <location evidence="1">Cytoplasm</location>
    </subcellularLocation>
</comment>
<comment type="similarity">
    <text evidence="1">Belongs to the RNA methyltransferase RlmH family.</text>
</comment>
<sequence>MKIRILTIGQKMPAWVLTGFEDYFKRIQPFVQTQVIELPMAKRGKNDSEADILKYCQIEGESILNALKPNETLIALEVGGRELSTEKLADTMKQWMLEGNDVALAIGGPDGLSDQVRKAAAWHWSLSKLTMPHPLVRILLIEQLYRAMSINHNHPYHRA</sequence>